<comment type="function">
    <text evidence="2 3">This three-finger cytotoxin has antiproliferative, cytotoxic and apoptotic activities. Both in vivo and in vitro experimental results suggests that this protein possess anticancer potential. Also shows neurotoxicity, cardiotoxicity and myotoxicity.</text>
</comment>
<comment type="subunit">
    <text evidence="1">Monomer in solution; Homodimer and oligomer in the presence of negatively charged lipids forming a pore with a size ranging between 20 and 30 Angstroms.</text>
</comment>
<comment type="subcellular location">
    <subcellularLocation>
        <location evidence="2 3">Secreted</location>
    </subcellularLocation>
    <subcellularLocation>
        <location evidence="1">Target cell membrane</location>
    </subcellularLocation>
</comment>
<comment type="tissue specificity">
    <text evidence="4">Expressed by the venom gland.</text>
</comment>
<comment type="similarity">
    <text evidence="4">Belongs to the three-finger toxin family. Short-chain subfamily. Type IA cytotoxin sub-subfamily.</text>
</comment>
<accession>P0C5H4</accession>
<dbReference type="GO" id="GO:0005576">
    <property type="term" value="C:extracellular region"/>
    <property type="evidence" value="ECO:0007669"/>
    <property type="project" value="UniProtKB-SubCell"/>
</dbReference>
<dbReference type="GO" id="GO:0016020">
    <property type="term" value="C:membrane"/>
    <property type="evidence" value="ECO:0007669"/>
    <property type="project" value="UniProtKB-KW"/>
</dbReference>
<dbReference type="GO" id="GO:0044218">
    <property type="term" value="C:other organism cell membrane"/>
    <property type="evidence" value="ECO:0007669"/>
    <property type="project" value="UniProtKB-KW"/>
</dbReference>
<dbReference type="GO" id="GO:0090729">
    <property type="term" value="F:toxin activity"/>
    <property type="evidence" value="ECO:0007669"/>
    <property type="project" value="UniProtKB-KW"/>
</dbReference>
<dbReference type="GO" id="GO:0006915">
    <property type="term" value="P:apoptotic process"/>
    <property type="evidence" value="ECO:0007669"/>
    <property type="project" value="UniProtKB-KW"/>
</dbReference>
<dbReference type="GO" id="GO:0031640">
    <property type="term" value="P:killing of cells of another organism"/>
    <property type="evidence" value="ECO:0007669"/>
    <property type="project" value="UniProtKB-KW"/>
</dbReference>
<evidence type="ECO:0000250" key="1">
    <source>
        <dbReference type="UniProtKB" id="P60301"/>
    </source>
</evidence>
<evidence type="ECO:0000269" key="2">
    <source>
    </source>
</evidence>
<evidence type="ECO:0000269" key="3">
    <source>
    </source>
</evidence>
<evidence type="ECO:0000305" key="4"/>
<keyword id="KW-0053">Apoptosis</keyword>
<keyword id="KW-0123">Cardiotoxin</keyword>
<keyword id="KW-0204">Cytolysis</keyword>
<keyword id="KW-0903">Direct protein sequencing</keyword>
<keyword id="KW-0472">Membrane</keyword>
<keyword id="KW-0959">Myotoxin</keyword>
<keyword id="KW-0528">Neurotoxin</keyword>
<keyword id="KW-0964">Secreted</keyword>
<keyword id="KW-1052">Target cell membrane</keyword>
<keyword id="KW-1053">Target membrane</keyword>
<keyword id="KW-0800">Toxin</keyword>
<reference key="1">
    <citation type="journal article" date="2007" name="Toxicon">
        <title>A heat stable protein toxin (drCT-I) from the Indian Viper (Daboia russelli russelli) venom having antiproliferative, cytotoxic and apoptotic activities.</title>
        <authorList>
            <person name="Gomes A."/>
            <person name="Choudhury S.R."/>
            <person name="Saha A."/>
            <person name="Mishra R."/>
            <person name="Giri B."/>
            <person name="Biswas A.K."/>
            <person name="Debnath A."/>
            <person name="Gomes A."/>
        </authorList>
    </citation>
    <scope>PROTEIN SEQUENCE</scope>
    <scope>FUNCTION</scope>
    <scope>SUBCELLULAR LOCATION</scope>
    <source>
        <tissue>Venom</tissue>
    </source>
</reference>
<reference key="2">
    <citation type="journal article" date="2006" name="Acta Crystallogr. F">
        <title>Purification, crystallization and preliminary X-ray structural studies of a 7.2 kDa cytotoxin isolated from the venom of Daboia russelli russelli of the Viperidae family.</title>
        <authorList>
            <person name="Choudhury S.R."/>
            <person name="Gomes A."/>
            <person name="Gomes A."/>
            <person name="Dattagupta J.K."/>
            <person name="Sen U."/>
        </authorList>
    </citation>
    <scope>CRYSTALLIZATION</scope>
    <scope>FUNCTION</scope>
    <scope>SUBCELLULAR LOCATION</scope>
    <source>
        <tissue>Venom</tissue>
    </source>
</reference>
<organism>
    <name type="scientific">Daboia russelii</name>
    <name type="common">Russel's viper</name>
    <name type="synonym">Vipera russelii</name>
    <dbReference type="NCBI Taxonomy" id="8707"/>
    <lineage>
        <taxon>Eukaryota</taxon>
        <taxon>Metazoa</taxon>
        <taxon>Chordata</taxon>
        <taxon>Craniata</taxon>
        <taxon>Vertebrata</taxon>
        <taxon>Euteleostomi</taxon>
        <taxon>Lepidosauria</taxon>
        <taxon>Squamata</taxon>
        <taxon>Bifurcata</taxon>
        <taxon>Unidentata</taxon>
        <taxon>Episquamata</taxon>
        <taxon>Toxicofera</taxon>
        <taxon>Serpentes</taxon>
        <taxon>Colubroidea</taxon>
        <taxon>Viperidae</taxon>
        <taxon>Viperinae</taxon>
        <taxon>Daboia</taxon>
    </lineage>
</organism>
<feature type="chain" id="PRO_0000306089" description="Cytotoxin drCT-1" evidence="3">
    <location>
        <begin position="1"/>
        <end position="20" status="greater than"/>
    </location>
</feature>
<feature type="non-terminal residue">
    <location>
        <position position="20"/>
    </location>
</feature>
<protein>
    <recommendedName>
        <fullName>Cytotoxin drCT-1</fullName>
    </recommendedName>
    <alternativeName>
        <fullName>drCT-I</fullName>
    </alternativeName>
</protein>
<sequence>LKCNKLVPLFYKTCPAGKNL</sequence>
<name>3SA1_DABRR</name>
<proteinExistence type="evidence at protein level"/>